<reference key="1">
    <citation type="journal article" date="1996" name="Theor. Appl. Genet.">
        <title>The maize two dimensional gel protein database: towards an integrated genome analysis program.</title>
        <authorList>
            <person name="Touzet P."/>
            <person name="Riccardi F."/>
            <person name="Morin C."/>
            <person name="Damerval C."/>
            <person name="Huet J.-C."/>
            <person name="Pernollet J.-C."/>
            <person name="Zivy M."/>
            <person name="de Vienne D."/>
        </authorList>
        <dbReference type="AGRICOLA" id="IND20551642"/>
    </citation>
    <scope>PROTEIN SEQUENCE</scope>
    <source>
        <tissue>Coleoptile</tissue>
    </source>
</reference>
<protein>
    <recommendedName>
        <fullName>Unknown protein from spot 75 of 2D-PAGE of etiolated coleoptile</fullName>
    </recommendedName>
</protein>
<dbReference type="MaizeGDB" id="123963"/>
<dbReference type="InParanoid" id="P80638"/>
<dbReference type="Proteomes" id="UP000007305">
    <property type="component" value="Unplaced"/>
</dbReference>
<evidence type="ECO:0000305" key="1"/>
<name>UC32_MAIZE</name>
<keyword id="KW-0903">Direct protein sequencing</keyword>
<keyword id="KW-1185">Reference proteome</keyword>
<organism>
    <name type="scientific">Zea mays</name>
    <name type="common">Maize</name>
    <dbReference type="NCBI Taxonomy" id="4577"/>
    <lineage>
        <taxon>Eukaryota</taxon>
        <taxon>Viridiplantae</taxon>
        <taxon>Streptophyta</taxon>
        <taxon>Embryophyta</taxon>
        <taxon>Tracheophyta</taxon>
        <taxon>Spermatophyta</taxon>
        <taxon>Magnoliopsida</taxon>
        <taxon>Liliopsida</taxon>
        <taxon>Poales</taxon>
        <taxon>Poaceae</taxon>
        <taxon>PACMAD clade</taxon>
        <taxon>Panicoideae</taxon>
        <taxon>Andropogonodae</taxon>
        <taxon>Andropogoneae</taxon>
        <taxon>Tripsacinae</taxon>
        <taxon>Zea</taxon>
    </lineage>
</organism>
<feature type="chain" id="PRO_0000055528" description="Unknown protein from spot 75 of 2D-PAGE of etiolated coleoptile">
    <location>
        <begin position="1" status="less than"/>
        <end position="49" status="greater than"/>
    </location>
</feature>
<feature type="non-consecutive residues" evidence="1">
    <location>
        <begin position="11"/>
        <end position="12"/>
    </location>
</feature>
<feature type="non-consecutive residues" evidence="1">
    <location>
        <begin position="17"/>
        <end position="18"/>
    </location>
</feature>
<feature type="non-consecutive residues" evidence="1">
    <location>
        <begin position="23"/>
        <end position="24"/>
    </location>
</feature>
<feature type="non-consecutive residues" evidence="1">
    <location>
        <begin position="35"/>
        <end position="36"/>
    </location>
</feature>
<feature type="non-consecutive residues" evidence="1">
    <location>
        <begin position="41"/>
        <end position="42"/>
    </location>
</feature>
<feature type="non-terminal residue">
    <location>
        <position position="1"/>
    </location>
</feature>
<feature type="non-terminal residue">
    <location>
        <position position="49"/>
    </location>
</feature>
<comment type="miscellaneous">
    <text>On the 2D-gel the determined pI of this unknown protein is: 6.0, its MW is: 38.0 kDa.</text>
</comment>
<comment type="caution">
    <text evidence="1">The order of the peptides shown is unknown.</text>
</comment>
<sequence length="49" mass="5579">XADGAMINYVEAFPHIKCTVLAPEFGAYVAFEVYPGFSEYKEWSELFTK</sequence>
<proteinExistence type="evidence at protein level"/>
<accession>P80638</accession>